<sequence length="428" mass="46870">MSSTVVVGSQWGDEGKGKITDFLSEKADVIARYQGGDNAGHTIVFNGQTFKLRLIPSGIFYADKTSVIGNGVVLNPQSLIEELTYLHDNGVATDNLRISDRAHVILPYHILLDQAQEKAKASKIGTTNKGIGPAYMDKAERIGIRVADLLDHDIFAEKLHQNLIEKNKVLTKLYDEEPLNYDDIFETYYALGQQLKGYVTDTSVVINDALDAGKNVLFEGAQGVMLDIDHGTYPFVTSSNPVAGGVTIGSGVGPTKIDHVVGVCKAYTSRVGDGPFPTELFDEIGDTIRETGHEYGTVTKRPRRIGWFDSVVLRHAKRVSGLTTLSLNCLDVLTGLKTVKICKAYQLNGETIYHYPASLVDLDACQPVYEELPGWDEDITHCRSVAELPANAQTYVKRLAELVGVEIATLSVGPDREQTNILQDVWNA</sequence>
<comment type="function">
    <text evidence="1">Plays an important role in the de novo pathway of purine nucleotide biosynthesis. Catalyzes the first committed step in the biosynthesis of AMP from IMP.</text>
</comment>
<comment type="catalytic activity">
    <reaction evidence="1">
        <text>IMP + L-aspartate + GTP = N(6)-(1,2-dicarboxyethyl)-AMP + GDP + phosphate + 2 H(+)</text>
        <dbReference type="Rhea" id="RHEA:15753"/>
        <dbReference type="ChEBI" id="CHEBI:15378"/>
        <dbReference type="ChEBI" id="CHEBI:29991"/>
        <dbReference type="ChEBI" id="CHEBI:37565"/>
        <dbReference type="ChEBI" id="CHEBI:43474"/>
        <dbReference type="ChEBI" id="CHEBI:57567"/>
        <dbReference type="ChEBI" id="CHEBI:58053"/>
        <dbReference type="ChEBI" id="CHEBI:58189"/>
        <dbReference type="EC" id="6.3.4.4"/>
    </reaction>
</comment>
<comment type="cofactor">
    <cofactor evidence="1">
        <name>Mg(2+)</name>
        <dbReference type="ChEBI" id="CHEBI:18420"/>
    </cofactor>
    <text evidence="1">Binds 1 Mg(2+) ion per subunit.</text>
</comment>
<comment type="pathway">
    <text evidence="1">Purine metabolism; AMP biosynthesis via de novo pathway; AMP from IMP: step 1/2.</text>
</comment>
<comment type="subunit">
    <text evidence="1">Homodimer.</text>
</comment>
<comment type="subcellular location">
    <subcellularLocation>
        <location evidence="1">Cytoplasm</location>
    </subcellularLocation>
</comment>
<comment type="similarity">
    <text evidence="1">Belongs to the adenylosuccinate synthetase family.</text>
</comment>
<organism>
    <name type="scientific">Levilactobacillus brevis (strain ATCC 367 / BCRC 12310 / CIP 105137 / JCM 1170 / LMG 11437 / NCIMB 947 / NCTC 947)</name>
    <name type="common">Lactobacillus brevis</name>
    <dbReference type="NCBI Taxonomy" id="387344"/>
    <lineage>
        <taxon>Bacteria</taxon>
        <taxon>Bacillati</taxon>
        <taxon>Bacillota</taxon>
        <taxon>Bacilli</taxon>
        <taxon>Lactobacillales</taxon>
        <taxon>Lactobacillaceae</taxon>
        <taxon>Levilactobacillus</taxon>
    </lineage>
</organism>
<feature type="chain" id="PRO_1000000841" description="Adenylosuccinate synthetase">
    <location>
        <begin position="1"/>
        <end position="428"/>
    </location>
</feature>
<feature type="active site" description="Proton acceptor" evidence="1">
    <location>
        <position position="13"/>
    </location>
</feature>
<feature type="active site" description="Proton donor" evidence="1">
    <location>
        <position position="41"/>
    </location>
</feature>
<feature type="binding site" evidence="1">
    <location>
        <begin position="12"/>
        <end position="18"/>
    </location>
    <ligand>
        <name>GTP</name>
        <dbReference type="ChEBI" id="CHEBI:37565"/>
    </ligand>
</feature>
<feature type="binding site" description="in other chain" evidence="1">
    <location>
        <begin position="13"/>
        <end position="16"/>
    </location>
    <ligand>
        <name>IMP</name>
        <dbReference type="ChEBI" id="CHEBI:58053"/>
        <note>ligand shared between dimeric partners</note>
    </ligand>
</feature>
<feature type="binding site" evidence="1">
    <location>
        <position position="13"/>
    </location>
    <ligand>
        <name>Mg(2+)</name>
        <dbReference type="ChEBI" id="CHEBI:18420"/>
    </ligand>
</feature>
<feature type="binding site" description="in other chain" evidence="1">
    <location>
        <begin position="38"/>
        <end position="41"/>
    </location>
    <ligand>
        <name>IMP</name>
        <dbReference type="ChEBI" id="CHEBI:58053"/>
        <note>ligand shared between dimeric partners</note>
    </ligand>
</feature>
<feature type="binding site" evidence="1">
    <location>
        <begin position="40"/>
        <end position="42"/>
    </location>
    <ligand>
        <name>GTP</name>
        <dbReference type="ChEBI" id="CHEBI:37565"/>
    </ligand>
</feature>
<feature type="binding site" evidence="1">
    <location>
        <position position="40"/>
    </location>
    <ligand>
        <name>Mg(2+)</name>
        <dbReference type="ChEBI" id="CHEBI:18420"/>
    </ligand>
</feature>
<feature type="binding site" description="in other chain" evidence="1">
    <location>
        <position position="127"/>
    </location>
    <ligand>
        <name>IMP</name>
        <dbReference type="ChEBI" id="CHEBI:58053"/>
        <note>ligand shared between dimeric partners</note>
    </ligand>
</feature>
<feature type="binding site" evidence="1">
    <location>
        <position position="141"/>
    </location>
    <ligand>
        <name>IMP</name>
        <dbReference type="ChEBI" id="CHEBI:58053"/>
        <note>ligand shared between dimeric partners</note>
    </ligand>
</feature>
<feature type="binding site" description="in other chain" evidence="1">
    <location>
        <position position="222"/>
    </location>
    <ligand>
        <name>IMP</name>
        <dbReference type="ChEBI" id="CHEBI:58053"/>
        <note>ligand shared between dimeric partners</note>
    </ligand>
</feature>
<feature type="binding site" description="in other chain" evidence="1">
    <location>
        <position position="237"/>
    </location>
    <ligand>
        <name>IMP</name>
        <dbReference type="ChEBI" id="CHEBI:58053"/>
        <note>ligand shared between dimeric partners</note>
    </ligand>
</feature>
<feature type="binding site" evidence="1">
    <location>
        <begin position="297"/>
        <end position="303"/>
    </location>
    <ligand>
        <name>substrate</name>
    </ligand>
</feature>
<feature type="binding site" description="in other chain" evidence="1">
    <location>
        <position position="301"/>
    </location>
    <ligand>
        <name>IMP</name>
        <dbReference type="ChEBI" id="CHEBI:58053"/>
        <note>ligand shared between dimeric partners</note>
    </ligand>
</feature>
<feature type="binding site" evidence="1">
    <location>
        <position position="303"/>
    </location>
    <ligand>
        <name>GTP</name>
        <dbReference type="ChEBI" id="CHEBI:37565"/>
    </ligand>
</feature>
<feature type="binding site" evidence="1">
    <location>
        <begin position="329"/>
        <end position="331"/>
    </location>
    <ligand>
        <name>GTP</name>
        <dbReference type="ChEBI" id="CHEBI:37565"/>
    </ligand>
</feature>
<feature type="binding site" evidence="1">
    <location>
        <begin position="411"/>
        <end position="413"/>
    </location>
    <ligand>
        <name>GTP</name>
        <dbReference type="ChEBI" id="CHEBI:37565"/>
    </ligand>
</feature>
<name>PURA_LEVBA</name>
<protein>
    <recommendedName>
        <fullName evidence="1">Adenylosuccinate synthetase</fullName>
        <shortName evidence="1">AMPSase</shortName>
        <shortName evidence="1">AdSS</shortName>
        <ecNumber evidence="1">6.3.4.4</ecNumber>
    </recommendedName>
    <alternativeName>
        <fullName evidence="1">IMP--aspartate ligase</fullName>
    </alternativeName>
</protein>
<evidence type="ECO:0000255" key="1">
    <source>
        <dbReference type="HAMAP-Rule" id="MF_00011"/>
    </source>
</evidence>
<keyword id="KW-0963">Cytoplasm</keyword>
<keyword id="KW-0342">GTP-binding</keyword>
<keyword id="KW-0436">Ligase</keyword>
<keyword id="KW-0460">Magnesium</keyword>
<keyword id="KW-0479">Metal-binding</keyword>
<keyword id="KW-0547">Nucleotide-binding</keyword>
<keyword id="KW-0658">Purine biosynthesis</keyword>
<keyword id="KW-1185">Reference proteome</keyword>
<reference key="1">
    <citation type="journal article" date="2006" name="Proc. Natl. Acad. Sci. U.S.A.">
        <title>Comparative genomics of the lactic acid bacteria.</title>
        <authorList>
            <person name="Makarova K.S."/>
            <person name="Slesarev A."/>
            <person name="Wolf Y.I."/>
            <person name="Sorokin A."/>
            <person name="Mirkin B."/>
            <person name="Koonin E.V."/>
            <person name="Pavlov A."/>
            <person name="Pavlova N."/>
            <person name="Karamychev V."/>
            <person name="Polouchine N."/>
            <person name="Shakhova V."/>
            <person name="Grigoriev I."/>
            <person name="Lou Y."/>
            <person name="Rohksar D."/>
            <person name="Lucas S."/>
            <person name="Huang K."/>
            <person name="Goodstein D.M."/>
            <person name="Hawkins T."/>
            <person name="Plengvidhya V."/>
            <person name="Welker D."/>
            <person name="Hughes J."/>
            <person name="Goh Y."/>
            <person name="Benson A."/>
            <person name="Baldwin K."/>
            <person name="Lee J.-H."/>
            <person name="Diaz-Muniz I."/>
            <person name="Dosti B."/>
            <person name="Smeianov V."/>
            <person name="Wechter W."/>
            <person name="Barabote R."/>
            <person name="Lorca G."/>
            <person name="Altermann E."/>
            <person name="Barrangou R."/>
            <person name="Ganesan B."/>
            <person name="Xie Y."/>
            <person name="Rawsthorne H."/>
            <person name="Tamir D."/>
            <person name="Parker C."/>
            <person name="Breidt F."/>
            <person name="Broadbent J.R."/>
            <person name="Hutkins R."/>
            <person name="O'Sullivan D."/>
            <person name="Steele J."/>
            <person name="Unlu G."/>
            <person name="Saier M.H. Jr."/>
            <person name="Klaenhammer T."/>
            <person name="Richardson P."/>
            <person name="Kozyavkin S."/>
            <person name="Weimer B.C."/>
            <person name="Mills D.A."/>
        </authorList>
    </citation>
    <scope>NUCLEOTIDE SEQUENCE [LARGE SCALE GENOMIC DNA]</scope>
    <source>
        <strain>ATCC 367 / BCRC 12310 / CIP 105137 / JCM 1170 / LMG 11437 / NCIMB 947 / NCTC 947</strain>
    </source>
</reference>
<gene>
    <name evidence="1" type="primary">purA</name>
    <name type="ordered locus">LVIS_0227</name>
</gene>
<proteinExistence type="inferred from homology"/>
<dbReference type="EC" id="6.3.4.4" evidence="1"/>
<dbReference type="EMBL" id="CP000416">
    <property type="protein sequence ID" value="ABJ63393.1"/>
    <property type="molecule type" value="Genomic_DNA"/>
</dbReference>
<dbReference type="RefSeq" id="WP_011667021.1">
    <property type="nucleotide sequence ID" value="NC_008497.1"/>
</dbReference>
<dbReference type="SMR" id="Q03TS9"/>
<dbReference type="STRING" id="387344.LVIS_0227"/>
<dbReference type="KEGG" id="lbr:LVIS_0227"/>
<dbReference type="eggNOG" id="COG0104">
    <property type="taxonomic scope" value="Bacteria"/>
</dbReference>
<dbReference type="HOGENOM" id="CLU_029848_0_0_9"/>
<dbReference type="UniPathway" id="UPA00075">
    <property type="reaction ID" value="UER00335"/>
</dbReference>
<dbReference type="Proteomes" id="UP000001652">
    <property type="component" value="Chromosome"/>
</dbReference>
<dbReference type="GO" id="GO:0005737">
    <property type="term" value="C:cytoplasm"/>
    <property type="evidence" value="ECO:0007669"/>
    <property type="project" value="UniProtKB-SubCell"/>
</dbReference>
<dbReference type="GO" id="GO:0004019">
    <property type="term" value="F:adenylosuccinate synthase activity"/>
    <property type="evidence" value="ECO:0007669"/>
    <property type="project" value="UniProtKB-UniRule"/>
</dbReference>
<dbReference type="GO" id="GO:0005525">
    <property type="term" value="F:GTP binding"/>
    <property type="evidence" value="ECO:0007669"/>
    <property type="project" value="UniProtKB-UniRule"/>
</dbReference>
<dbReference type="GO" id="GO:0000287">
    <property type="term" value="F:magnesium ion binding"/>
    <property type="evidence" value="ECO:0007669"/>
    <property type="project" value="UniProtKB-UniRule"/>
</dbReference>
<dbReference type="GO" id="GO:0044208">
    <property type="term" value="P:'de novo' AMP biosynthetic process"/>
    <property type="evidence" value="ECO:0007669"/>
    <property type="project" value="UniProtKB-UniRule"/>
</dbReference>
<dbReference type="GO" id="GO:0046040">
    <property type="term" value="P:IMP metabolic process"/>
    <property type="evidence" value="ECO:0007669"/>
    <property type="project" value="TreeGrafter"/>
</dbReference>
<dbReference type="CDD" id="cd03108">
    <property type="entry name" value="AdSS"/>
    <property type="match status" value="1"/>
</dbReference>
<dbReference type="FunFam" id="1.10.300.10:FF:000001">
    <property type="entry name" value="Adenylosuccinate synthetase"/>
    <property type="match status" value="1"/>
</dbReference>
<dbReference type="FunFam" id="3.90.170.10:FF:000001">
    <property type="entry name" value="Adenylosuccinate synthetase"/>
    <property type="match status" value="1"/>
</dbReference>
<dbReference type="Gene3D" id="3.40.440.10">
    <property type="entry name" value="Adenylosuccinate Synthetase, subunit A, domain 1"/>
    <property type="match status" value="1"/>
</dbReference>
<dbReference type="Gene3D" id="1.10.300.10">
    <property type="entry name" value="Adenylosuccinate Synthetase, subunit A, domain 2"/>
    <property type="match status" value="1"/>
</dbReference>
<dbReference type="Gene3D" id="3.90.170.10">
    <property type="entry name" value="Adenylosuccinate Synthetase, subunit A, domain 3"/>
    <property type="match status" value="1"/>
</dbReference>
<dbReference type="HAMAP" id="MF_00011">
    <property type="entry name" value="Adenylosucc_synth"/>
    <property type="match status" value="1"/>
</dbReference>
<dbReference type="InterPro" id="IPR018220">
    <property type="entry name" value="Adenylosuccin_syn_GTP-bd"/>
</dbReference>
<dbReference type="InterPro" id="IPR033128">
    <property type="entry name" value="Adenylosuccin_syn_Lys_AS"/>
</dbReference>
<dbReference type="InterPro" id="IPR042109">
    <property type="entry name" value="Adenylosuccinate_synth_dom1"/>
</dbReference>
<dbReference type="InterPro" id="IPR042110">
    <property type="entry name" value="Adenylosuccinate_synth_dom2"/>
</dbReference>
<dbReference type="InterPro" id="IPR042111">
    <property type="entry name" value="Adenylosuccinate_synth_dom3"/>
</dbReference>
<dbReference type="InterPro" id="IPR001114">
    <property type="entry name" value="Adenylosuccinate_synthetase"/>
</dbReference>
<dbReference type="InterPro" id="IPR027417">
    <property type="entry name" value="P-loop_NTPase"/>
</dbReference>
<dbReference type="NCBIfam" id="NF002223">
    <property type="entry name" value="PRK01117.1"/>
    <property type="match status" value="1"/>
</dbReference>
<dbReference type="NCBIfam" id="TIGR00184">
    <property type="entry name" value="purA"/>
    <property type="match status" value="1"/>
</dbReference>
<dbReference type="PANTHER" id="PTHR11846">
    <property type="entry name" value="ADENYLOSUCCINATE SYNTHETASE"/>
    <property type="match status" value="1"/>
</dbReference>
<dbReference type="PANTHER" id="PTHR11846:SF0">
    <property type="entry name" value="ADENYLOSUCCINATE SYNTHETASE"/>
    <property type="match status" value="1"/>
</dbReference>
<dbReference type="Pfam" id="PF00709">
    <property type="entry name" value="Adenylsucc_synt"/>
    <property type="match status" value="1"/>
</dbReference>
<dbReference type="SMART" id="SM00788">
    <property type="entry name" value="Adenylsucc_synt"/>
    <property type="match status" value="1"/>
</dbReference>
<dbReference type="SUPFAM" id="SSF52540">
    <property type="entry name" value="P-loop containing nucleoside triphosphate hydrolases"/>
    <property type="match status" value="1"/>
</dbReference>
<dbReference type="PROSITE" id="PS01266">
    <property type="entry name" value="ADENYLOSUCCIN_SYN_1"/>
    <property type="match status" value="1"/>
</dbReference>
<dbReference type="PROSITE" id="PS00513">
    <property type="entry name" value="ADENYLOSUCCIN_SYN_2"/>
    <property type="match status" value="1"/>
</dbReference>
<accession>Q03TS9</accession>